<accession>B5XHH0</accession>
<reference key="1">
    <citation type="journal article" date="2009" name="Infect. Immun.">
        <title>Comparative genomics reveal extensive transposon-mediated genomic plasticity and diversity among potential effector proteins within the genus Coxiella.</title>
        <authorList>
            <person name="Beare P.A."/>
            <person name="Unsworth N."/>
            <person name="Andoh M."/>
            <person name="Voth D.E."/>
            <person name="Omsland A."/>
            <person name="Gilk S.D."/>
            <person name="Williams K.P."/>
            <person name="Sobral B.W."/>
            <person name="Kupko J.J. III"/>
            <person name="Porcella S.F."/>
            <person name="Samuel J.E."/>
            <person name="Heinzen R.A."/>
        </authorList>
    </citation>
    <scope>NUCLEOTIDE SEQUENCE [LARGE SCALE GENOMIC DNA]</scope>
    <source>
        <strain>Dugway 5J108-111</strain>
    </source>
</reference>
<name>Y1597_COXBN</name>
<gene>
    <name type="ordered locus">CBUD_1597.1</name>
    <name type="ORF">CBUD_1597a</name>
</gene>
<sequence>MDRILLEILACPICKGKLVYSQDEQELICRFDKLAYPIHDGIPVMLPDSTRPLIER</sequence>
<comment type="similarity">
    <text evidence="1">Belongs to the UPF0434 family.</text>
</comment>
<evidence type="ECO:0000255" key="1">
    <source>
        <dbReference type="HAMAP-Rule" id="MF_01187"/>
    </source>
</evidence>
<dbReference type="EMBL" id="CP000733">
    <property type="protein sequence ID" value="ACI23190.1"/>
    <property type="molecule type" value="Genomic_DNA"/>
</dbReference>
<dbReference type="RefSeq" id="WP_011997173.1">
    <property type="nucleotide sequence ID" value="NC_009727.1"/>
</dbReference>
<dbReference type="SMR" id="B5XHH0"/>
<dbReference type="KEGG" id="cbd:CBUD_1597a"/>
<dbReference type="HOGENOM" id="CLU_155659_3_1_6"/>
<dbReference type="Proteomes" id="UP000008555">
    <property type="component" value="Chromosome"/>
</dbReference>
<dbReference type="GO" id="GO:0005829">
    <property type="term" value="C:cytosol"/>
    <property type="evidence" value="ECO:0007669"/>
    <property type="project" value="TreeGrafter"/>
</dbReference>
<dbReference type="FunFam" id="2.20.25.10:FF:000002">
    <property type="entry name" value="UPF0434 protein YcaR"/>
    <property type="match status" value="1"/>
</dbReference>
<dbReference type="Gene3D" id="2.20.25.10">
    <property type="match status" value="1"/>
</dbReference>
<dbReference type="HAMAP" id="MF_01187">
    <property type="entry name" value="UPF0434"/>
    <property type="match status" value="1"/>
</dbReference>
<dbReference type="InterPro" id="IPR005651">
    <property type="entry name" value="Trm112-like"/>
</dbReference>
<dbReference type="PANTHER" id="PTHR33505:SF4">
    <property type="entry name" value="PROTEIN PREY, MITOCHONDRIAL"/>
    <property type="match status" value="1"/>
</dbReference>
<dbReference type="PANTHER" id="PTHR33505">
    <property type="entry name" value="ZGC:162634"/>
    <property type="match status" value="1"/>
</dbReference>
<dbReference type="Pfam" id="PF03966">
    <property type="entry name" value="Trm112p"/>
    <property type="match status" value="1"/>
</dbReference>
<dbReference type="SUPFAM" id="SSF158997">
    <property type="entry name" value="Trm112p-like"/>
    <property type="match status" value="1"/>
</dbReference>
<feature type="chain" id="PRO_1000138299" description="UPF0434 protein CBUD_1597.1">
    <location>
        <begin position="1"/>
        <end position="56"/>
    </location>
</feature>
<proteinExistence type="inferred from homology"/>
<protein>
    <recommendedName>
        <fullName evidence="1">UPF0434 protein CBUD_1597.1</fullName>
    </recommendedName>
</protein>
<organism>
    <name type="scientific">Coxiella burnetii (strain Dugway 5J108-111)</name>
    <dbReference type="NCBI Taxonomy" id="434922"/>
    <lineage>
        <taxon>Bacteria</taxon>
        <taxon>Pseudomonadati</taxon>
        <taxon>Pseudomonadota</taxon>
        <taxon>Gammaproteobacteria</taxon>
        <taxon>Legionellales</taxon>
        <taxon>Coxiellaceae</taxon>
        <taxon>Coxiella</taxon>
    </lineage>
</organism>